<organism>
    <name type="scientific">Clostridioides difficile (strain 630)</name>
    <name type="common">Peptoclostridium difficile</name>
    <dbReference type="NCBI Taxonomy" id="272563"/>
    <lineage>
        <taxon>Bacteria</taxon>
        <taxon>Bacillati</taxon>
        <taxon>Bacillota</taxon>
        <taxon>Clostridia</taxon>
        <taxon>Peptostreptococcales</taxon>
        <taxon>Peptostreptococcaceae</taxon>
        <taxon>Clostridioides</taxon>
    </lineage>
</organism>
<name>REX_CLOD6</name>
<sequence>MLGNKNISMAVIRRLPKYHRYLGDLLDRDIQRISSKELSDIIGFTASQIRQDLNNFGGFGQQGYGYNVEALHTEIGKILGLDRPYNAVLVGAGNLGQAIANYAGFRKAGFEIKALFDANPRMIGLKIREFEVLDSDTLEDFIKNNNIDIAVLCIPKNGAQEVINRVVKAGIKGVWNFAPLDLEVPKGVIVENVNLTESLFTLSYLMKEGK</sequence>
<dbReference type="EMBL" id="AM180355">
    <property type="protein sequence ID" value="CAJ66992.1"/>
    <property type="molecule type" value="Genomic_DNA"/>
</dbReference>
<dbReference type="RefSeq" id="WP_003420839.1">
    <property type="nucleotide sequence ID" value="NZ_JAUPES010000004.1"/>
</dbReference>
<dbReference type="RefSeq" id="YP_001086640.1">
    <property type="nucleotide sequence ID" value="NC_009089.1"/>
</dbReference>
<dbReference type="SMR" id="Q18CR5"/>
<dbReference type="STRING" id="272563.CD630_01710"/>
<dbReference type="EnsemblBacteria" id="CAJ66992">
    <property type="protein sequence ID" value="CAJ66992"/>
    <property type="gene ID" value="CD630_01710"/>
</dbReference>
<dbReference type="KEGG" id="cdf:CD630_01710"/>
<dbReference type="KEGG" id="pdc:CDIF630_00292"/>
<dbReference type="PATRIC" id="fig|272563.120.peg.186"/>
<dbReference type="eggNOG" id="COG2344">
    <property type="taxonomic scope" value="Bacteria"/>
</dbReference>
<dbReference type="OrthoDB" id="9784760at2"/>
<dbReference type="PhylomeDB" id="Q18CR5"/>
<dbReference type="BioCyc" id="PDIF272563:G12WB-276-MONOMER"/>
<dbReference type="PHI-base" id="PHI:9140"/>
<dbReference type="Proteomes" id="UP000001978">
    <property type="component" value="Chromosome"/>
</dbReference>
<dbReference type="GO" id="GO:0005737">
    <property type="term" value="C:cytoplasm"/>
    <property type="evidence" value="ECO:0007669"/>
    <property type="project" value="UniProtKB-SubCell"/>
</dbReference>
<dbReference type="GO" id="GO:0003677">
    <property type="term" value="F:DNA binding"/>
    <property type="evidence" value="ECO:0007669"/>
    <property type="project" value="UniProtKB-UniRule"/>
</dbReference>
<dbReference type="GO" id="GO:0003700">
    <property type="term" value="F:DNA-binding transcription factor activity"/>
    <property type="evidence" value="ECO:0007669"/>
    <property type="project" value="UniProtKB-UniRule"/>
</dbReference>
<dbReference type="GO" id="GO:0045892">
    <property type="term" value="P:negative regulation of DNA-templated transcription"/>
    <property type="evidence" value="ECO:0007669"/>
    <property type="project" value="InterPro"/>
</dbReference>
<dbReference type="GO" id="GO:0051775">
    <property type="term" value="P:response to redox state"/>
    <property type="evidence" value="ECO:0007669"/>
    <property type="project" value="InterPro"/>
</dbReference>
<dbReference type="Gene3D" id="3.40.50.720">
    <property type="entry name" value="NAD(P)-binding Rossmann-like Domain"/>
    <property type="match status" value="1"/>
</dbReference>
<dbReference type="Gene3D" id="1.10.10.10">
    <property type="entry name" value="Winged helix-like DNA-binding domain superfamily/Winged helix DNA-binding domain"/>
    <property type="match status" value="1"/>
</dbReference>
<dbReference type="HAMAP" id="MF_01131">
    <property type="entry name" value="Rex"/>
    <property type="match status" value="1"/>
</dbReference>
<dbReference type="InterPro" id="IPR003781">
    <property type="entry name" value="CoA-bd"/>
</dbReference>
<dbReference type="InterPro" id="IPR036291">
    <property type="entry name" value="NAD(P)-bd_dom_sf"/>
</dbReference>
<dbReference type="InterPro" id="IPR009718">
    <property type="entry name" value="Rex_DNA-bd_C_dom"/>
</dbReference>
<dbReference type="InterPro" id="IPR022876">
    <property type="entry name" value="Tscrpt_rep_Rex"/>
</dbReference>
<dbReference type="InterPro" id="IPR036388">
    <property type="entry name" value="WH-like_DNA-bd_sf"/>
</dbReference>
<dbReference type="InterPro" id="IPR036390">
    <property type="entry name" value="WH_DNA-bd_sf"/>
</dbReference>
<dbReference type="NCBIfam" id="NF003989">
    <property type="entry name" value="PRK05472.1-3"/>
    <property type="match status" value="1"/>
</dbReference>
<dbReference type="NCBIfam" id="NF003990">
    <property type="entry name" value="PRK05472.1-4"/>
    <property type="match status" value="1"/>
</dbReference>
<dbReference type="NCBIfam" id="NF003993">
    <property type="entry name" value="PRK05472.2-2"/>
    <property type="match status" value="1"/>
</dbReference>
<dbReference type="NCBIfam" id="NF003994">
    <property type="entry name" value="PRK05472.2-3"/>
    <property type="match status" value="1"/>
</dbReference>
<dbReference type="NCBIfam" id="NF003995">
    <property type="entry name" value="PRK05472.2-4"/>
    <property type="match status" value="1"/>
</dbReference>
<dbReference type="NCBIfam" id="NF003996">
    <property type="entry name" value="PRK05472.2-5"/>
    <property type="match status" value="1"/>
</dbReference>
<dbReference type="PANTHER" id="PTHR35786">
    <property type="entry name" value="REDOX-SENSING TRANSCRIPTIONAL REPRESSOR REX"/>
    <property type="match status" value="1"/>
</dbReference>
<dbReference type="PANTHER" id="PTHR35786:SF1">
    <property type="entry name" value="REDOX-SENSING TRANSCRIPTIONAL REPRESSOR REX 1"/>
    <property type="match status" value="1"/>
</dbReference>
<dbReference type="Pfam" id="PF02629">
    <property type="entry name" value="CoA_binding"/>
    <property type="match status" value="1"/>
</dbReference>
<dbReference type="Pfam" id="PF06971">
    <property type="entry name" value="Put_DNA-bind_N"/>
    <property type="match status" value="1"/>
</dbReference>
<dbReference type="SMART" id="SM00881">
    <property type="entry name" value="CoA_binding"/>
    <property type="match status" value="1"/>
</dbReference>
<dbReference type="SUPFAM" id="SSF51735">
    <property type="entry name" value="NAD(P)-binding Rossmann-fold domains"/>
    <property type="match status" value="1"/>
</dbReference>
<dbReference type="SUPFAM" id="SSF46785">
    <property type="entry name" value="Winged helix' DNA-binding domain"/>
    <property type="match status" value="1"/>
</dbReference>
<gene>
    <name evidence="1" type="primary">rex</name>
    <name type="ordered locus">CD630_01710</name>
</gene>
<comment type="function">
    <text evidence="1">Modulates transcription in response to changes in cellular NADH/NAD(+) redox state.</text>
</comment>
<comment type="subunit">
    <text evidence="1">Homodimer.</text>
</comment>
<comment type="subcellular location">
    <subcellularLocation>
        <location evidence="1">Cytoplasm</location>
    </subcellularLocation>
</comment>
<comment type="similarity">
    <text evidence="1">Belongs to the transcriptional regulatory Rex family.</text>
</comment>
<proteinExistence type="inferred from homology"/>
<feature type="chain" id="PRO_1000065396" description="Redox-sensing transcriptional repressor Rex">
    <location>
        <begin position="1"/>
        <end position="210"/>
    </location>
</feature>
<feature type="DNA-binding region" description="H-T-H motif" evidence="1">
    <location>
        <begin position="17"/>
        <end position="56"/>
    </location>
</feature>
<feature type="binding site" evidence="1">
    <location>
        <begin position="91"/>
        <end position="96"/>
    </location>
    <ligand>
        <name>NAD(+)</name>
        <dbReference type="ChEBI" id="CHEBI:57540"/>
    </ligand>
</feature>
<protein>
    <recommendedName>
        <fullName evidence="1">Redox-sensing transcriptional repressor Rex</fullName>
    </recommendedName>
</protein>
<evidence type="ECO:0000255" key="1">
    <source>
        <dbReference type="HAMAP-Rule" id="MF_01131"/>
    </source>
</evidence>
<keyword id="KW-0963">Cytoplasm</keyword>
<keyword id="KW-0238">DNA-binding</keyword>
<keyword id="KW-0520">NAD</keyword>
<keyword id="KW-1185">Reference proteome</keyword>
<keyword id="KW-0678">Repressor</keyword>
<keyword id="KW-0804">Transcription</keyword>
<keyword id="KW-0805">Transcription regulation</keyword>
<reference key="1">
    <citation type="journal article" date="2006" name="Nat. Genet.">
        <title>The multidrug-resistant human pathogen Clostridium difficile has a highly mobile, mosaic genome.</title>
        <authorList>
            <person name="Sebaihia M."/>
            <person name="Wren B.W."/>
            <person name="Mullany P."/>
            <person name="Fairweather N.F."/>
            <person name="Minton N."/>
            <person name="Stabler R."/>
            <person name="Thomson N.R."/>
            <person name="Roberts A.P."/>
            <person name="Cerdeno-Tarraga A.M."/>
            <person name="Wang H."/>
            <person name="Holden M.T.G."/>
            <person name="Wright A."/>
            <person name="Churcher C."/>
            <person name="Quail M.A."/>
            <person name="Baker S."/>
            <person name="Bason N."/>
            <person name="Brooks K."/>
            <person name="Chillingworth T."/>
            <person name="Cronin A."/>
            <person name="Davis P."/>
            <person name="Dowd L."/>
            <person name="Fraser A."/>
            <person name="Feltwell T."/>
            <person name="Hance Z."/>
            <person name="Holroyd S."/>
            <person name="Jagels K."/>
            <person name="Moule S."/>
            <person name="Mungall K."/>
            <person name="Price C."/>
            <person name="Rabbinowitsch E."/>
            <person name="Sharp S."/>
            <person name="Simmonds M."/>
            <person name="Stevens K."/>
            <person name="Unwin L."/>
            <person name="Whithead S."/>
            <person name="Dupuy B."/>
            <person name="Dougan G."/>
            <person name="Barrell B."/>
            <person name="Parkhill J."/>
        </authorList>
    </citation>
    <scope>NUCLEOTIDE SEQUENCE [LARGE SCALE GENOMIC DNA]</scope>
    <source>
        <strain>630</strain>
    </source>
</reference>
<accession>Q18CR5</accession>